<protein>
    <recommendedName>
        <fullName>Porphobilinogen deaminase</fullName>
        <shortName>PBG</shortName>
        <ecNumber>2.5.1.61</ecNumber>
    </recommendedName>
    <alternativeName>
        <fullName>Hydroxymethylbilane synthase</fullName>
        <shortName>HMBS</shortName>
    </alternativeName>
    <alternativeName>
        <fullName>Pre-uroporphyrinogen synthase</fullName>
    </alternativeName>
</protein>
<gene>
    <name type="primary">hemC</name>
    <name type="ordered locus">VC_0120</name>
</gene>
<keyword id="KW-0002">3D-structure</keyword>
<keyword id="KW-0627">Porphyrin biosynthesis</keyword>
<keyword id="KW-1185">Reference proteome</keyword>
<keyword id="KW-0808">Transferase</keyword>
<name>HEM3_VIBCH</name>
<reference key="1">
    <citation type="journal article" date="2000" name="Nature">
        <title>DNA sequence of both chromosomes of the cholera pathogen Vibrio cholerae.</title>
        <authorList>
            <person name="Heidelberg J.F."/>
            <person name="Eisen J.A."/>
            <person name="Nelson W.C."/>
            <person name="Clayton R.A."/>
            <person name="Gwinn M.L."/>
            <person name="Dodson R.J."/>
            <person name="Haft D.H."/>
            <person name="Hickey E.K."/>
            <person name="Peterson J.D."/>
            <person name="Umayam L.A."/>
            <person name="Gill S.R."/>
            <person name="Nelson K.E."/>
            <person name="Read T.D."/>
            <person name="Tettelin H."/>
            <person name="Richardson D.L."/>
            <person name="Ermolaeva M.D."/>
            <person name="Vamathevan J.J."/>
            <person name="Bass S."/>
            <person name="Qin H."/>
            <person name="Dragoi I."/>
            <person name="Sellers P."/>
            <person name="McDonald L.A."/>
            <person name="Utterback T.R."/>
            <person name="Fleischmann R.D."/>
            <person name="Nierman W.C."/>
            <person name="White O."/>
            <person name="Salzberg S.L."/>
            <person name="Smith H.O."/>
            <person name="Colwell R.R."/>
            <person name="Mekalanos J.J."/>
            <person name="Venter J.C."/>
            <person name="Fraser C.M."/>
        </authorList>
    </citation>
    <scope>NUCLEOTIDE SEQUENCE [LARGE SCALE GENOMIC DNA]</scope>
    <source>
        <strain>ATCC 39315 / El Tor Inaba N16961</strain>
    </source>
</reference>
<proteinExistence type="evidence at protein level"/>
<organism>
    <name type="scientific">Vibrio cholerae serotype O1 (strain ATCC 39315 / El Tor Inaba N16961)</name>
    <dbReference type="NCBI Taxonomy" id="243277"/>
    <lineage>
        <taxon>Bacteria</taxon>
        <taxon>Pseudomonadati</taxon>
        <taxon>Pseudomonadota</taxon>
        <taxon>Gammaproteobacteria</taxon>
        <taxon>Vibrionales</taxon>
        <taxon>Vibrionaceae</taxon>
        <taxon>Vibrio</taxon>
    </lineage>
</organism>
<accession>Q9KVM1</accession>
<dbReference type="EC" id="2.5.1.61"/>
<dbReference type="EMBL" id="AE003852">
    <property type="protein sequence ID" value="AAF93298.1"/>
    <property type="status" value="ALT_INIT"/>
    <property type="molecule type" value="Genomic_DNA"/>
</dbReference>
<dbReference type="PIR" id="F82362">
    <property type="entry name" value="F82362"/>
</dbReference>
<dbReference type="RefSeq" id="NP_229779.1">
    <property type="nucleotide sequence ID" value="NC_002505.1"/>
</dbReference>
<dbReference type="RefSeq" id="WP_000141022.1">
    <property type="nucleotide sequence ID" value="NZ_LT906614.1"/>
</dbReference>
<dbReference type="PDB" id="5H6O">
    <property type="method" value="X-ray"/>
    <property type="resolution" value="2.70 A"/>
    <property type="chains" value="A=1-311"/>
</dbReference>
<dbReference type="PDBsum" id="5H6O"/>
<dbReference type="SMR" id="Q9KVM1"/>
<dbReference type="STRING" id="243277.VC_0120"/>
<dbReference type="DNASU" id="2614463"/>
<dbReference type="EnsemblBacteria" id="AAF93298">
    <property type="protein sequence ID" value="AAF93298"/>
    <property type="gene ID" value="VC_0120"/>
</dbReference>
<dbReference type="KEGG" id="vch:VC_0120"/>
<dbReference type="PATRIC" id="fig|243277.26.peg.111"/>
<dbReference type="eggNOG" id="COG0181">
    <property type="taxonomic scope" value="Bacteria"/>
</dbReference>
<dbReference type="HOGENOM" id="CLU_019704_0_2_6"/>
<dbReference type="UniPathway" id="UPA00251">
    <property type="reaction ID" value="UER00319"/>
</dbReference>
<dbReference type="Proteomes" id="UP000000584">
    <property type="component" value="Chromosome 1"/>
</dbReference>
<dbReference type="GO" id="GO:0005737">
    <property type="term" value="C:cytoplasm"/>
    <property type="evidence" value="ECO:0000318"/>
    <property type="project" value="GO_Central"/>
</dbReference>
<dbReference type="GO" id="GO:0004418">
    <property type="term" value="F:hydroxymethylbilane synthase activity"/>
    <property type="evidence" value="ECO:0000318"/>
    <property type="project" value="GO_Central"/>
</dbReference>
<dbReference type="GO" id="GO:0006783">
    <property type="term" value="P:heme biosynthetic process"/>
    <property type="evidence" value="ECO:0000318"/>
    <property type="project" value="GO_Central"/>
</dbReference>
<dbReference type="GO" id="GO:0006782">
    <property type="term" value="P:protoporphyrinogen IX biosynthetic process"/>
    <property type="evidence" value="ECO:0007669"/>
    <property type="project" value="UniProtKB-UniRule"/>
</dbReference>
<dbReference type="CDD" id="cd13646">
    <property type="entry name" value="PBP2_EcHMBS_like"/>
    <property type="match status" value="1"/>
</dbReference>
<dbReference type="FunFam" id="3.30.160.40:FF:000002">
    <property type="entry name" value="Porphobilinogen deaminase"/>
    <property type="match status" value="1"/>
</dbReference>
<dbReference type="FunFam" id="3.40.190.10:FF:000004">
    <property type="entry name" value="Porphobilinogen deaminase"/>
    <property type="match status" value="1"/>
</dbReference>
<dbReference type="FunFam" id="3.40.190.10:FF:000005">
    <property type="entry name" value="Porphobilinogen deaminase"/>
    <property type="match status" value="1"/>
</dbReference>
<dbReference type="Gene3D" id="3.40.190.10">
    <property type="entry name" value="Periplasmic binding protein-like II"/>
    <property type="match status" value="2"/>
</dbReference>
<dbReference type="Gene3D" id="3.30.160.40">
    <property type="entry name" value="Porphobilinogen deaminase, C-terminal domain"/>
    <property type="match status" value="1"/>
</dbReference>
<dbReference type="HAMAP" id="MF_00260">
    <property type="entry name" value="Porphobil_deam"/>
    <property type="match status" value="1"/>
</dbReference>
<dbReference type="InterPro" id="IPR000860">
    <property type="entry name" value="HemC"/>
</dbReference>
<dbReference type="InterPro" id="IPR022419">
    <property type="entry name" value="Porphobilin_deaminase_cofac_BS"/>
</dbReference>
<dbReference type="InterPro" id="IPR022417">
    <property type="entry name" value="Porphobilin_deaminase_N"/>
</dbReference>
<dbReference type="InterPro" id="IPR022418">
    <property type="entry name" value="Porphobilinogen_deaminase_C"/>
</dbReference>
<dbReference type="InterPro" id="IPR036803">
    <property type="entry name" value="Porphobilinogen_deaminase_C_sf"/>
</dbReference>
<dbReference type="NCBIfam" id="TIGR00212">
    <property type="entry name" value="hemC"/>
    <property type="match status" value="1"/>
</dbReference>
<dbReference type="PANTHER" id="PTHR11557">
    <property type="entry name" value="PORPHOBILINOGEN DEAMINASE"/>
    <property type="match status" value="1"/>
</dbReference>
<dbReference type="PANTHER" id="PTHR11557:SF0">
    <property type="entry name" value="PORPHOBILINOGEN DEAMINASE"/>
    <property type="match status" value="1"/>
</dbReference>
<dbReference type="Pfam" id="PF01379">
    <property type="entry name" value="Porphobil_deam"/>
    <property type="match status" value="1"/>
</dbReference>
<dbReference type="Pfam" id="PF03900">
    <property type="entry name" value="Porphobil_deamC"/>
    <property type="match status" value="1"/>
</dbReference>
<dbReference type="PIRSF" id="PIRSF001438">
    <property type="entry name" value="4pyrrol_synth_OHMeBilane_synth"/>
    <property type="match status" value="1"/>
</dbReference>
<dbReference type="PRINTS" id="PR00151">
    <property type="entry name" value="PORPHBDMNASE"/>
</dbReference>
<dbReference type="SUPFAM" id="SSF53850">
    <property type="entry name" value="Periplasmic binding protein-like II"/>
    <property type="match status" value="1"/>
</dbReference>
<dbReference type="SUPFAM" id="SSF54782">
    <property type="entry name" value="Porphobilinogen deaminase (hydroxymethylbilane synthase), C-terminal domain"/>
    <property type="match status" value="1"/>
</dbReference>
<dbReference type="PROSITE" id="PS00533">
    <property type="entry name" value="PORPHOBILINOGEN_DEAM"/>
    <property type="match status" value="1"/>
</dbReference>
<evidence type="ECO:0000250" key="1"/>
<evidence type="ECO:0000305" key="2"/>
<evidence type="ECO:0007829" key="3">
    <source>
        <dbReference type="PDB" id="5H6O"/>
    </source>
</evidence>
<comment type="function">
    <text evidence="1">Tetrapolymerization of the monopyrrole PBG into the hydroxymethylbilane pre-uroporphyrinogen in several discrete steps.</text>
</comment>
<comment type="catalytic activity">
    <reaction>
        <text>4 porphobilinogen + H2O = hydroxymethylbilane + 4 NH4(+)</text>
        <dbReference type="Rhea" id="RHEA:13185"/>
        <dbReference type="ChEBI" id="CHEBI:15377"/>
        <dbReference type="ChEBI" id="CHEBI:28938"/>
        <dbReference type="ChEBI" id="CHEBI:57845"/>
        <dbReference type="ChEBI" id="CHEBI:58126"/>
        <dbReference type="EC" id="2.5.1.61"/>
    </reaction>
</comment>
<comment type="cofactor">
    <cofactor evidence="1">
        <name>dipyrromethane</name>
        <dbReference type="ChEBI" id="CHEBI:60342"/>
    </cofactor>
    <text evidence="1">Binds 1 dipyrromethane group covalently.</text>
</comment>
<comment type="pathway">
    <text>Porphyrin-containing compound metabolism; protoporphyrin-IX biosynthesis; coproporphyrinogen-III from 5-aminolevulinate: step 2/4.</text>
</comment>
<comment type="subunit">
    <text evidence="1">Monomer.</text>
</comment>
<comment type="miscellaneous">
    <text evidence="1">The porphobilinogen subunits are added to the dipyrromethane group.</text>
</comment>
<comment type="similarity">
    <text evidence="2">Belongs to the HMBS family.</text>
</comment>
<comment type="sequence caution" evidence="2">
    <conflict type="erroneous initiation">
        <sequence resource="EMBL-CDS" id="AAF93298"/>
    </conflict>
</comment>
<sequence length="311" mass="33849">MTETPIRIATRQSPLALWQANYVKDALMAAHPGLQVELVTMVTRGDVILDTPLAKVGGKGLFVKELEIAMLEGRADLAVHSMKDVPVDFPDGLGLVTICEREDPRDAFVSNTYAKIEDLPSGAIVGTCSLRRQCQLKAARPDLVIKELRGNVGTRLSKLDAGEYDAIILAAAGLKRLELESRIRSFIEPEQSLPAVGQGAVGIECRVNDQRVRALLAPLNHADTADRVRCERAMNLTLQGGCQVPIGSYALLEGDTIWLRALVGEPDGSQIVRGEIRGPRTQAEQLGITLAEQLLSQGAKEILERLYCDHE</sequence>
<feature type="chain" id="PRO_0000143005" description="Porphobilinogen deaminase">
    <location>
        <begin position="1"/>
        <end position="311"/>
    </location>
</feature>
<feature type="modified residue" description="S-(dipyrrolylmethanemethyl)cysteine" evidence="1">
    <location>
        <position position="242"/>
    </location>
</feature>
<feature type="strand" evidence="3">
    <location>
        <begin position="6"/>
        <end position="10"/>
    </location>
</feature>
<feature type="helix" evidence="3">
    <location>
        <begin position="14"/>
        <end position="30"/>
    </location>
</feature>
<feature type="strand" evidence="3">
    <location>
        <begin position="36"/>
        <end position="40"/>
    </location>
</feature>
<feature type="helix" evidence="3">
    <location>
        <begin position="64"/>
        <end position="71"/>
    </location>
</feature>
<feature type="strand" evidence="3">
    <location>
        <begin position="76"/>
        <end position="81"/>
    </location>
</feature>
<feature type="turn" evidence="3">
    <location>
        <begin position="82"/>
        <end position="84"/>
    </location>
</feature>
<feature type="strand" evidence="3">
    <location>
        <begin position="93"/>
        <end position="98"/>
    </location>
</feature>
<feature type="strand" evidence="3">
    <location>
        <begin position="105"/>
        <end position="109"/>
    </location>
</feature>
<feature type="helix" evidence="3">
    <location>
        <begin position="116"/>
        <end position="118"/>
    </location>
</feature>
<feature type="strand" evidence="3">
    <location>
        <begin position="124"/>
        <end position="126"/>
    </location>
</feature>
<feature type="helix" evidence="3">
    <location>
        <begin position="130"/>
        <end position="139"/>
    </location>
</feature>
<feature type="strand" evidence="3">
    <location>
        <begin position="143"/>
        <end position="146"/>
    </location>
</feature>
<feature type="helix" evidence="3">
    <location>
        <begin position="152"/>
        <end position="160"/>
    </location>
</feature>
<feature type="strand" evidence="3">
    <location>
        <begin position="165"/>
        <end position="170"/>
    </location>
</feature>
<feature type="helix" evidence="3">
    <location>
        <begin position="171"/>
        <end position="176"/>
    </location>
</feature>
<feature type="helix" evidence="3">
    <location>
        <begin position="180"/>
        <end position="182"/>
    </location>
</feature>
<feature type="strand" evidence="3">
    <location>
        <begin position="184"/>
        <end position="187"/>
    </location>
</feature>
<feature type="turn" evidence="3">
    <location>
        <begin position="189"/>
        <end position="191"/>
    </location>
</feature>
<feature type="turn" evidence="3">
    <location>
        <begin position="196"/>
        <end position="199"/>
    </location>
</feature>
<feature type="strand" evidence="3">
    <location>
        <begin position="201"/>
        <end position="206"/>
    </location>
</feature>
<feature type="helix" evidence="3">
    <location>
        <begin position="210"/>
        <end position="215"/>
    </location>
</feature>
<feature type="turn" evidence="3">
    <location>
        <begin position="217"/>
        <end position="219"/>
    </location>
</feature>
<feature type="helix" evidence="3">
    <location>
        <begin position="222"/>
        <end position="238"/>
    </location>
</feature>
<feature type="strand" evidence="3">
    <location>
        <begin position="241"/>
        <end position="244"/>
    </location>
</feature>
<feature type="strand" evidence="3">
    <location>
        <begin position="246"/>
        <end position="253"/>
    </location>
</feature>
<feature type="strand" evidence="3">
    <location>
        <begin position="256"/>
        <end position="264"/>
    </location>
</feature>
<feature type="strand" evidence="3">
    <location>
        <begin position="271"/>
        <end position="278"/>
    </location>
</feature>
<feature type="helix" evidence="3">
    <location>
        <begin position="280"/>
        <end position="282"/>
    </location>
</feature>
<feature type="helix" evidence="3">
    <location>
        <begin position="283"/>
        <end position="295"/>
    </location>
</feature>
<feature type="turn" evidence="3">
    <location>
        <begin position="296"/>
        <end position="299"/>
    </location>
</feature>
<feature type="helix" evidence="3">
    <location>
        <begin position="300"/>
        <end position="302"/>
    </location>
</feature>